<evidence type="ECO:0000255" key="1">
    <source>
        <dbReference type="HAMAP-Rule" id="MF_01341"/>
    </source>
</evidence>
<evidence type="ECO:0000256" key="2">
    <source>
        <dbReference type="SAM" id="MobiDB-lite"/>
    </source>
</evidence>
<evidence type="ECO:0000305" key="3"/>
<organism>
    <name type="scientific">Acinetobacter baumannii (strain SDF)</name>
    <dbReference type="NCBI Taxonomy" id="509170"/>
    <lineage>
        <taxon>Bacteria</taxon>
        <taxon>Pseudomonadati</taxon>
        <taxon>Pseudomonadota</taxon>
        <taxon>Gammaproteobacteria</taxon>
        <taxon>Moraxellales</taxon>
        <taxon>Moraxellaceae</taxon>
        <taxon>Acinetobacter</taxon>
        <taxon>Acinetobacter calcoaceticus/baumannii complex</taxon>
    </lineage>
</organism>
<keyword id="KW-0687">Ribonucleoprotein</keyword>
<keyword id="KW-0689">Ribosomal protein</keyword>
<keyword id="KW-0694">RNA-binding</keyword>
<keyword id="KW-0699">rRNA-binding</keyword>
<dbReference type="EMBL" id="CU468230">
    <property type="protein sequence ID" value="CAO99833.1"/>
    <property type="molecule type" value="Genomic_DNA"/>
</dbReference>
<dbReference type="SMR" id="B0VQT7"/>
<dbReference type="KEGG" id="abm:ABSDF0442"/>
<dbReference type="HOGENOM" id="CLU_055188_4_2_6"/>
<dbReference type="Proteomes" id="UP000001741">
    <property type="component" value="Chromosome"/>
</dbReference>
<dbReference type="GO" id="GO:0022625">
    <property type="term" value="C:cytosolic large ribosomal subunit"/>
    <property type="evidence" value="ECO:0007669"/>
    <property type="project" value="TreeGrafter"/>
</dbReference>
<dbReference type="GO" id="GO:0019843">
    <property type="term" value="F:rRNA binding"/>
    <property type="evidence" value="ECO:0007669"/>
    <property type="project" value="UniProtKB-UniRule"/>
</dbReference>
<dbReference type="GO" id="GO:0003735">
    <property type="term" value="F:structural constituent of ribosome"/>
    <property type="evidence" value="ECO:0007669"/>
    <property type="project" value="InterPro"/>
</dbReference>
<dbReference type="GO" id="GO:0006412">
    <property type="term" value="P:translation"/>
    <property type="evidence" value="ECO:0007669"/>
    <property type="project" value="UniProtKB-UniRule"/>
</dbReference>
<dbReference type="Gene3D" id="3.100.10.10">
    <property type="match status" value="1"/>
</dbReference>
<dbReference type="HAMAP" id="MF_01341">
    <property type="entry name" value="Ribosomal_uL15"/>
    <property type="match status" value="1"/>
</dbReference>
<dbReference type="InterPro" id="IPR030878">
    <property type="entry name" value="Ribosomal_uL15"/>
</dbReference>
<dbReference type="InterPro" id="IPR021131">
    <property type="entry name" value="Ribosomal_uL15/eL18"/>
</dbReference>
<dbReference type="InterPro" id="IPR036227">
    <property type="entry name" value="Ribosomal_uL15/eL18_sf"/>
</dbReference>
<dbReference type="InterPro" id="IPR005749">
    <property type="entry name" value="Ribosomal_uL15_bac-type"/>
</dbReference>
<dbReference type="InterPro" id="IPR001196">
    <property type="entry name" value="Ribosomal_uL15_CS"/>
</dbReference>
<dbReference type="NCBIfam" id="TIGR01071">
    <property type="entry name" value="rplO_bact"/>
    <property type="match status" value="1"/>
</dbReference>
<dbReference type="PANTHER" id="PTHR12934">
    <property type="entry name" value="50S RIBOSOMAL PROTEIN L15"/>
    <property type="match status" value="1"/>
</dbReference>
<dbReference type="PANTHER" id="PTHR12934:SF11">
    <property type="entry name" value="LARGE RIBOSOMAL SUBUNIT PROTEIN UL15M"/>
    <property type="match status" value="1"/>
</dbReference>
<dbReference type="Pfam" id="PF00828">
    <property type="entry name" value="Ribosomal_L27A"/>
    <property type="match status" value="1"/>
</dbReference>
<dbReference type="SUPFAM" id="SSF52080">
    <property type="entry name" value="Ribosomal proteins L15p and L18e"/>
    <property type="match status" value="1"/>
</dbReference>
<dbReference type="PROSITE" id="PS00475">
    <property type="entry name" value="RIBOSOMAL_L15"/>
    <property type="match status" value="1"/>
</dbReference>
<comment type="function">
    <text evidence="1">Binds to the 23S rRNA.</text>
</comment>
<comment type="subunit">
    <text evidence="1">Part of the 50S ribosomal subunit.</text>
</comment>
<comment type="similarity">
    <text evidence="1">Belongs to the universal ribosomal protein uL15 family.</text>
</comment>
<feature type="chain" id="PRO_1000142759" description="Large ribosomal subunit protein uL15">
    <location>
        <begin position="1"/>
        <end position="146"/>
    </location>
</feature>
<feature type="region of interest" description="Disordered" evidence="2">
    <location>
        <begin position="1"/>
        <end position="54"/>
    </location>
</feature>
<feature type="compositionally biased region" description="Gly residues" evidence="2">
    <location>
        <begin position="23"/>
        <end position="37"/>
    </location>
</feature>
<proteinExistence type="inferred from homology"/>
<protein>
    <recommendedName>
        <fullName evidence="1">Large ribosomal subunit protein uL15</fullName>
    </recommendedName>
    <alternativeName>
        <fullName evidence="3">50S ribosomal protein L15</fullName>
    </alternativeName>
</protein>
<reference key="1">
    <citation type="journal article" date="2008" name="PLoS ONE">
        <title>Comparative analysis of Acinetobacters: three genomes for three lifestyles.</title>
        <authorList>
            <person name="Vallenet D."/>
            <person name="Nordmann P."/>
            <person name="Barbe V."/>
            <person name="Poirel L."/>
            <person name="Mangenot S."/>
            <person name="Bataille E."/>
            <person name="Dossat C."/>
            <person name="Gas S."/>
            <person name="Kreimeyer A."/>
            <person name="Lenoble P."/>
            <person name="Oztas S."/>
            <person name="Poulain J."/>
            <person name="Segurens B."/>
            <person name="Robert C."/>
            <person name="Abergel C."/>
            <person name="Claverie J.-M."/>
            <person name="Raoult D."/>
            <person name="Medigue C."/>
            <person name="Weissenbach J."/>
            <person name="Cruveiller S."/>
        </authorList>
    </citation>
    <scope>NUCLEOTIDE SEQUENCE [LARGE SCALE GENOMIC DNA]</scope>
    <source>
        <strain>SDF</strain>
    </source>
</reference>
<sequence>MTLRLNELAPAEGAKREHRRLGRGIGSGVGKTGGRGIKGQKSRKSGGVRPGFEGGQTAIYRRLPKFGFTSQIALKTAEVRLSELSKVEGDIVSLETLKAANVVRRDQIRARIVLSGEITRAFTVQGVALTKGAKAAIEAAGGKVEE</sequence>
<accession>B0VQT7</accession>
<gene>
    <name evidence="1" type="primary">rplO</name>
    <name type="ordered locus">ABSDF0442</name>
</gene>
<name>RL15_ACIBS</name>